<protein>
    <recommendedName>
        <fullName evidence="1">Large ribosomal subunit protein uL18</fullName>
    </recommendedName>
    <alternativeName>
        <fullName evidence="2">50S ribosomal protein L18</fullName>
    </alternativeName>
</protein>
<accession>Q824N6</accession>
<name>RL18_CHLCV</name>
<gene>
    <name evidence="1" type="primary">rplR</name>
    <name type="ordered locus">CCA_00108</name>
</gene>
<dbReference type="EMBL" id="AE015925">
    <property type="protein sequence ID" value="AAP04860.1"/>
    <property type="molecule type" value="Genomic_DNA"/>
</dbReference>
<dbReference type="RefSeq" id="WP_011006081.1">
    <property type="nucleotide sequence ID" value="NC_003361.3"/>
</dbReference>
<dbReference type="SMR" id="Q824N6"/>
<dbReference type="STRING" id="227941.CCA_00108"/>
<dbReference type="KEGG" id="cca:CCA_00108"/>
<dbReference type="eggNOG" id="COG0256">
    <property type="taxonomic scope" value="Bacteria"/>
</dbReference>
<dbReference type="HOGENOM" id="CLU_098841_0_1_0"/>
<dbReference type="OrthoDB" id="9810939at2"/>
<dbReference type="Proteomes" id="UP000002193">
    <property type="component" value="Chromosome"/>
</dbReference>
<dbReference type="GO" id="GO:0022625">
    <property type="term" value="C:cytosolic large ribosomal subunit"/>
    <property type="evidence" value="ECO:0007669"/>
    <property type="project" value="TreeGrafter"/>
</dbReference>
<dbReference type="GO" id="GO:0008097">
    <property type="term" value="F:5S rRNA binding"/>
    <property type="evidence" value="ECO:0007669"/>
    <property type="project" value="TreeGrafter"/>
</dbReference>
<dbReference type="GO" id="GO:0003735">
    <property type="term" value="F:structural constituent of ribosome"/>
    <property type="evidence" value="ECO:0007669"/>
    <property type="project" value="InterPro"/>
</dbReference>
<dbReference type="GO" id="GO:0006412">
    <property type="term" value="P:translation"/>
    <property type="evidence" value="ECO:0007669"/>
    <property type="project" value="UniProtKB-UniRule"/>
</dbReference>
<dbReference type="CDD" id="cd00432">
    <property type="entry name" value="Ribosomal_L18_L5e"/>
    <property type="match status" value="1"/>
</dbReference>
<dbReference type="FunFam" id="3.30.420.100:FF:000001">
    <property type="entry name" value="50S ribosomal protein L18"/>
    <property type="match status" value="1"/>
</dbReference>
<dbReference type="Gene3D" id="3.30.420.100">
    <property type="match status" value="1"/>
</dbReference>
<dbReference type="HAMAP" id="MF_01337_B">
    <property type="entry name" value="Ribosomal_uL18_B"/>
    <property type="match status" value="1"/>
</dbReference>
<dbReference type="InterPro" id="IPR004389">
    <property type="entry name" value="Ribosomal_uL18_bac-type"/>
</dbReference>
<dbReference type="InterPro" id="IPR005484">
    <property type="entry name" value="Ribosomal_uL18_bac/euk"/>
</dbReference>
<dbReference type="NCBIfam" id="TIGR00060">
    <property type="entry name" value="L18_bact"/>
    <property type="match status" value="1"/>
</dbReference>
<dbReference type="PANTHER" id="PTHR12899">
    <property type="entry name" value="39S RIBOSOMAL PROTEIN L18, MITOCHONDRIAL"/>
    <property type="match status" value="1"/>
</dbReference>
<dbReference type="PANTHER" id="PTHR12899:SF3">
    <property type="entry name" value="LARGE RIBOSOMAL SUBUNIT PROTEIN UL18M"/>
    <property type="match status" value="1"/>
</dbReference>
<dbReference type="Pfam" id="PF00861">
    <property type="entry name" value="Ribosomal_L18p"/>
    <property type="match status" value="1"/>
</dbReference>
<dbReference type="SUPFAM" id="SSF53137">
    <property type="entry name" value="Translational machinery components"/>
    <property type="match status" value="1"/>
</dbReference>
<comment type="function">
    <text evidence="1">This is one of the proteins that bind and probably mediate the attachment of the 5S RNA into the large ribosomal subunit, where it forms part of the central protuberance.</text>
</comment>
<comment type="subunit">
    <text evidence="1">Part of the 50S ribosomal subunit; part of the 5S rRNA/L5/L18/L25 subcomplex. Contacts the 5S and 23S rRNAs.</text>
</comment>
<comment type="similarity">
    <text evidence="1">Belongs to the universal ribosomal protein uL18 family.</text>
</comment>
<proteinExistence type="inferred from homology"/>
<keyword id="KW-0687">Ribonucleoprotein</keyword>
<keyword id="KW-0689">Ribosomal protein</keyword>
<keyword id="KW-0694">RNA-binding</keyword>
<keyword id="KW-0699">rRNA-binding</keyword>
<organism>
    <name type="scientific">Chlamydia caviae (strain ATCC VR-813 / DSM 19441 / 03DC25 / GPIC)</name>
    <name type="common">Chlamydophila caviae</name>
    <dbReference type="NCBI Taxonomy" id="227941"/>
    <lineage>
        <taxon>Bacteria</taxon>
        <taxon>Pseudomonadati</taxon>
        <taxon>Chlamydiota</taxon>
        <taxon>Chlamydiia</taxon>
        <taxon>Chlamydiales</taxon>
        <taxon>Chlamydiaceae</taxon>
        <taxon>Chlamydia/Chlamydophila group</taxon>
        <taxon>Chlamydia</taxon>
    </lineage>
</organism>
<sequence length="123" mass="13566">MENSLFKKSEKKVHRALRVRKVLRGSSLKPRLCVVKTNKHIYVQLIDDSIGKTLASVSTMAKSNKASGLIKKNQDVAKTLGTQIAEIGKSLQVDRVVFDRGPFKYHGIIAMVADGAREGGLQF</sequence>
<reference key="1">
    <citation type="journal article" date="2003" name="Nucleic Acids Res.">
        <title>Genome sequence of Chlamydophila caviae (Chlamydia psittaci GPIC): examining the role of niche-specific genes in the evolution of the Chlamydiaceae.</title>
        <authorList>
            <person name="Read T.D."/>
            <person name="Myers G.S.A."/>
            <person name="Brunham R.C."/>
            <person name="Nelson W.C."/>
            <person name="Paulsen I.T."/>
            <person name="Heidelberg J.F."/>
            <person name="Holtzapple E.K."/>
            <person name="Khouri H.M."/>
            <person name="Federova N.B."/>
            <person name="Carty H.A."/>
            <person name="Umayam L.A."/>
            <person name="Haft D.H."/>
            <person name="Peterson J.D."/>
            <person name="Beanan M.J."/>
            <person name="White O."/>
            <person name="Salzberg S.L."/>
            <person name="Hsia R.-C."/>
            <person name="McClarty G."/>
            <person name="Rank R.G."/>
            <person name="Bavoil P.M."/>
            <person name="Fraser C.M."/>
        </authorList>
    </citation>
    <scope>NUCLEOTIDE SEQUENCE [LARGE SCALE GENOMIC DNA]</scope>
    <source>
        <strain>ATCC VR-813 / DSM 19441 / 03DC25 / GPIC</strain>
    </source>
</reference>
<feature type="chain" id="PRO_0000131242" description="Large ribosomal subunit protein uL18">
    <location>
        <begin position="1"/>
        <end position="123"/>
    </location>
</feature>
<evidence type="ECO:0000255" key="1">
    <source>
        <dbReference type="HAMAP-Rule" id="MF_01337"/>
    </source>
</evidence>
<evidence type="ECO:0000305" key="2"/>